<name>SO1A6_RAT</name>
<evidence type="ECO:0000250" key="1"/>
<evidence type="ECO:0000250" key="2">
    <source>
        <dbReference type="UniProtKB" id="Q99J94"/>
    </source>
</evidence>
<evidence type="ECO:0000255" key="3"/>
<evidence type="ECO:0000255" key="4">
    <source>
        <dbReference type="PROSITE-ProRule" id="PRU00798"/>
    </source>
</evidence>
<evidence type="ECO:0000256" key="5">
    <source>
        <dbReference type="SAM" id="MobiDB-lite"/>
    </source>
</evidence>
<evidence type="ECO:0000305" key="6"/>
<feature type="chain" id="PRO_0000191049" description="Solute carrier organic anion transporter family member 1A6">
    <location>
        <begin position="1"/>
        <end position="670"/>
    </location>
</feature>
<feature type="topological domain" description="Cytoplasmic" evidence="3">
    <location>
        <begin position="1"/>
        <end position="20"/>
    </location>
</feature>
<feature type="transmembrane region" description="Helical; Name=1" evidence="3">
    <location>
        <begin position="21"/>
        <end position="40"/>
    </location>
</feature>
<feature type="topological domain" description="Extracellular" evidence="3">
    <location>
        <begin position="41"/>
        <end position="59"/>
    </location>
</feature>
<feature type="transmembrane region" description="Helical; Name=2" evidence="3">
    <location>
        <begin position="60"/>
        <end position="80"/>
    </location>
</feature>
<feature type="topological domain" description="Cytoplasmic" evidence="3">
    <location>
        <begin position="81"/>
        <end position="86"/>
    </location>
</feature>
<feature type="transmembrane region" description="Helical; Name=3" evidence="3">
    <location>
        <begin position="87"/>
        <end position="111"/>
    </location>
</feature>
<feature type="topological domain" description="Extracellular" evidence="3">
    <location>
        <begin position="112"/>
        <end position="155"/>
    </location>
</feature>
<feature type="transmembrane region" description="Helical; Name=4" evidence="3">
    <location>
        <begin position="156"/>
        <end position="184"/>
    </location>
</feature>
<feature type="topological domain" description="Cytoplasmic" evidence="3">
    <location>
        <begin position="185"/>
        <end position="203"/>
    </location>
</feature>
<feature type="transmembrane region" description="Helical; Name=5" evidence="3">
    <location>
        <begin position="204"/>
        <end position="224"/>
    </location>
</feature>
<feature type="topological domain" description="Extracellular" evidence="3">
    <location>
        <begin position="225"/>
        <end position="242"/>
    </location>
</feature>
<feature type="transmembrane region" description="Helical; Name=6" evidence="3">
    <location>
        <begin position="243"/>
        <end position="267"/>
    </location>
</feature>
<feature type="topological domain" description="Cytoplasmic" evidence="3">
    <location>
        <begin position="268"/>
        <end position="311"/>
    </location>
</feature>
<feature type="transmembrane region" description="Helical; Name=7" evidence="3">
    <location>
        <begin position="312"/>
        <end position="333"/>
    </location>
</feature>
<feature type="topological domain" description="Extracellular" evidence="3">
    <location>
        <begin position="334"/>
        <end position="353"/>
    </location>
</feature>
<feature type="transmembrane region" description="Helical; Name=8" evidence="3">
    <location>
        <begin position="354"/>
        <end position="377"/>
    </location>
</feature>
<feature type="topological domain" description="Cytoplasmic" evidence="3">
    <location>
        <begin position="378"/>
        <end position="381"/>
    </location>
</feature>
<feature type="transmembrane region" description="Helical; Name=9" evidence="3">
    <location>
        <begin position="382"/>
        <end position="405"/>
    </location>
</feature>
<feature type="topological domain" description="Extracellular" evidence="3">
    <location>
        <begin position="406"/>
        <end position="513"/>
    </location>
</feature>
<feature type="transmembrane region" description="Helical; Name=10" evidence="3">
    <location>
        <begin position="514"/>
        <end position="536"/>
    </location>
</feature>
<feature type="topological domain" description="Cytoplasmic" evidence="3">
    <location>
        <begin position="537"/>
        <end position="545"/>
    </location>
</feature>
<feature type="transmembrane region" description="Helical; Name=11" evidence="3">
    <location>
        <begin position="546"/>
        <end position="571"/>
    </location>
</feature>
<feature type="topological domain" description="Extracellular" evidence="3">
    <location>
        <begin position="572"/>
        <end position="605"/>
    </location>
</feature>
<feature type="transmembrane region" description="Helical; Name=12" evidence="3">
    <location>
        <begin position="606"/>
        <end position="623"/>
    </location>
</feature>
<feature type="topological domain" description="Cytoplasmic" evidence="3">
    <location>
        <begin position="624"/>
        <end position="670"/>
    </location>
</feature>
<feature type="domain" description="Kazal-like" evidence="4">
    <location>
        <begin position="433"/>
        <end position="488"/>
    </location>
</feature>
<feature type="region of interest" description="Disordered" evidence="5">
    <location>
        <begin position="276"/>
        <end position="295"/>
    </location>
</feature>
<feature type="region of interest" description="Disordered" evidence="5">
    <location>
        <begin position="647"/>
        <end position="670"/>
    </location>
</feature>
<feature type="modified residue" description="Phosphoserine" evidence="2">
    <location>
        <position position="634"/>
    </location>
</feature>
<feature type="glycosylation site" description="N-linked (GlcNAc...) asparagine" evidence="3">
    <location>
        <position position="52"/>
    </location>
</feature>
<feature type="glycosylation site" description="N-linked (GlcNAc...) asparagine" evidence="3">
    <location>
        <position position="124"/>
    </location>
</feature>
<feature type="glycosylation site" description="N-linked (GlcNAc...) asparagine" evidence="3">
    <location>
        <position position="135"/>
    </location>
</feature>
<feature type="glycosylation site" description="N-linked (GlcNAc...) asparagine" evidence="3">
    <location>
        <position position="492"/>
    </location>
</feature>
<feature type="disulfide bond" evidence="4">
    <location>
        <begin position="439"/>
        <end position="469"/>
    </location>
</feature>
<feature type="disulfide bond" evidence="4">
    <location>
        <begin position="445"/>
        <end position="465"/>
    </location>
</feature>
<feature type="disulfide bond" evidence="4">
    <location>
        <begin position="454"/>
        <end position="486"/>
    </location>
</feature>
<dbReference type="EMBL" id="AF053317">
    <property type="protein sequence ID" value="AAF21711.2"/>
    <property type="molecule type" value="mRNA"/>
</dbReference>
<dbReference type="RefSeq" id="NP_570092.1">
    <property type="nucleotide sequence ID" value="NM_130736.1"/>
</dbReference>
<dbReference type="RefSeq" id="XP_017448409.1">
    <property type="nucleotide sequence ID" value="XM_017592920.1"/>
</dbReference>
<dbReference type="RefSeq" id="XP_017448410.1">
    <property type="nucleotide sequence ID" value="XM_017592921.1"/>
</dbReference>
<dbReference type="RefSeq" id="XP_017448411.1">
    <property type="nucleotide sequence ID" value="XM_017592922.1"/>
</dbReference>
<dbReference type="SMR" id="Q9QYE2"/>
<dbReference type="FunCoup" id="Q9QYE2">
    <property type="interactions" value="3"/>
</dbReference>
<dbReference type="STRING" id="10116.ENSRNOP00000039792"/>
<dbReference type="GlyCosmos" id="Q9QYE2">
    <property type="glycosylation" value="4 sites, No reported glycans"/>
</dbReference>
<dbReference type="GlyGen" id="Q9QYE2">
    <property type="glycosylation" value="4 sites"/>
</dbReference>
<dbReference type="PhosphoSitePlus" id="Q9QYE2"/>
<dbReference type="PaxDb" id="10116-ENSRNOP00000039792"/>
<dbReference type="GeneID" id="84608"/>
<dbReference type="KEGG" id="rno:84608"/>
<dbReference type="UCSC" id="RGD:69304">
    <property type="organism name" value="rat"/>
</dbReference>
<dbReference type="AGR" id="RGD:69304"/>
<dbReference type="CTD" id="28254"/>
<dbReference type="RGD" id="69304">
    <property type="gene designation" value="Slco1a6"/>
</dbReference>
<dbReference type="VEuPathDB" id="HostDB:ENSRNOG00000030894"/>
<dbReference type="eggNOG" id="KOG3626">
    <property type="taxonomic scope" value="Eukaryota"/>
</dbReference>
<dbReference type="HOGENOM" id="CLU_008954_4_0_1"/>
<dbReference type="InParanoid" id="Q9QYE2"/>
<dbReference type="OrthoDB" id="5062115at2759"/>
<dbReference type="PhylomeDB" id="Q9QYE2"/>
<dbReference type="TreeFam" id="TF317540"/>
<dbReference type="PRO" id="PR:Q9QYE2"/>
<dbReference type="Proteomes" id="UP000002494">
    <property type="component" value="Chromosome 4"/>
</dbReference>
<dbReference type="Bgee" id="ENSRNOG00000030894">
    <property type="expression patterns" value="Expressed in kidney and 5 other cell types or tissues"/>
</dbReference>
<dbReference type="GO" id="GO:0016323">
    <property type="term" value="C:basolateral plasma membrane"/>
    <property type="evidence" value="ECO:0000318"/>
    <property type="project" value="GO_Central"/>
</dbReference>
<dbReference type="GO" id="GO:0015125">
    <property type="term" value="F:bile acid transmembrane transporter activity"/>
    <property type="evidence" value="ECO:0000318"/>
    <property type="project" value="GO_Central"/>
</dbReference>
<dbReference type="GO" id="GO:0015347">
    <property type="term" value="F:sodium-independent organic anion transmembrane transporter activity"/>
    <property type="evidence" value="ECO:0000318"/>
    <property type="project" value="GO_Central"/>
</dbReference>
<dbReference type="GO" id="GO:0015721">
    <property type="term" value="P:bile acid and bile salt transport"/>
    <property type="evidence" value="ECO:0000318"/>
    <property type="project" value="GO_Central"/>
</dbReference>
<dbReference type="GO" id="GO:0008206">
    <property type="term" value="P:bile acid metabolic process"/>
    <property type="evidence" value="ECO:0007669"/>
    <property type="project" value="Ensembl"/>
</dbReference>
<dbReference type="GO" id="GO:0042632">
    <property type="term" value="P:cholesterol homeostasis"/>
    <property type="evidence" value="ECO:0007669"/>
    <property type="project" value="Ensembl"/>
</dbReference>
<dbReference type="GO" id="GO:0042168">
    <property type="term" value="P:heme metabolic process"/>
    <property type="evidence" value="ECO:0007669"/>
    <property type="project" value="Ensembl"/>
</dbReference>
<dbReference type="GO" id="GO:0097421">
    <property type="term" value="P:liver regeneration"/>
    <property type="evidence" value="ECO:0000270"/>
    <property type="project" value="RGD"/>
</dbReference>
<dbReference type="GO" id="GO:0006811">
    <property type="term" value="P:monoatomic ion transport"/>
    <property type="evidence" value="ECO:0007669"/>
    <property type="project" value="UniProtKB-KW"/>
</dbReference>
<dbReference type="GO" id="GO:0035264">
    <property type="term" value="P:multicellular organism growth"/>
    <property type="evidence" value="ECO:0007669"/>
    <property type="project" value="Ensembl"/>
</dbReference>
<dbReference type="GO" id="GO:0043252">
    <property type="term" value="P:sodium-independent organic anion transport"/>
    <property type="evidence" value="ECO:0000318"/>
    <property type="project" value="GO_Central"/>
</dbReference>
<dbReference type="GO" id="GO:0070328">
    <property type="term" value="P:triglyceride homeostasis"/>
    <property type="evidence" value="ECO:0007669"/>
    <property type="project" value="Ensembl"/>
</dbReference>
<dbReference type="GO" id="GO:0006805">
    <property type="term" value="P:xenobiotic metabolic process"/>
    <property type="evidence" value="ECO:0007669"/>
    <property type="project" value="Ensembl"/>
</dbReference>
<dbReference type="FunFam" id="1.20.1250.20:FF:000210">
    <property type="entry name" value="Solute carrier organic anion transporter family member"/>
    <property type="match status" value="1"/>
</dbReference>
<dbReference type="Gene3D" id="1.20.1250.20">
    <property type="entry name" value="MFS general substrate transporter like domains"/>
    <property type="match status" value="1"/>
</dbReference>
<dbReference type="InterPro" id="IPR002350">
    <property type="entry name" value="Kazal_dom"/>
</dbReference>
<dbReference type="InterPro" id="IPR036058">
    <property type="entry name" value="Kazal_dom_sf"/>
</dbReference>
<dbReference type="InterPro" id="IPR036259">
    <property type="entry name" value="MFS_trans_sf"/>
</dbReference>
<dbReference type="InterPro" id="IPR004156">
    <property type="entry name" value="OATP"/>
</dbReference>
<dbReference type="NCBIfam" id="TIGR00805">
    <property type="entry name" value="oat"/>
    <property type="match status" value="1"/>
</dbReference>
<dbReference type="PANTHER" id="PTHR11388">
    <property type="entry name" value="ORGANIC ANION TRANSPORTER"/>
    <property type="match status" value="1"/>
</dbReference>
<dbReference type="PANTHER" id="PTHR11388:SF84">
    <property type="entry name" value="SOLUTE CARRIER ORGANIC ANION TRANSPORTER FAMILY MEMBER 1A6"/>
    <property type="match status" value="1"/>
</dbReference>
<dbReference type="Pfam" id="PF07648">
    <property type="entry name" value="Kazal_2"/>
    <property type="match status" value="1"/>
</dbReference>
<dbReference type="Pfam" id="PF03137">
    <property type="entry name" value="OATP"/>
    <property type="match status" value="1"/>
</dbReference>
<dbReference type="SUPFAM" id="SSF100895">
    <property type="entry name" value="Kazal-type serine protease inhibitors"/>
    <property type="match status" value="1"/>
</dbReference>
<dbReference type="SUPFAM" id="SSF103473">
    <property type="entry name" value="MFS general substrate transporter"/>
    <property type="match status" value="1"/>
</dbReference>
<dbReference type="PROSITE" id="PS51465">
    <property type="entry name" value="KAZAL_2"/>
    <property type="match status" value="1"/>
</dbReference>
<accession>Q9QYE2</accession>
<organism>
    <name type="scientific">Rattus norvegicus</name>
    <name type="common">Rat</name>
    <dbReference type="NCBI Taxonomy" id="10116"/>
    <lineage>
        <taxon>Eukaryota</taxon>
        <taxon>Metazoa</taxon>
        <taxon>Chordata</taxon>
        <taxon>Craniata</taxon>
        <taxon>Vertebrata</taxon>
        <taxon>Euteleostomi</taxon>
        <taxon>Mammalia</taxon>
        <taxon>Eutheria</taxon>
        <taxon>Euarchontoglires</taxon>
        <taxon>Glires</taxon>
        <taxon>Rodentia</taxon>
        <taxon>Myomorpha</taxon>
        <taxon>Muroidea</taxon>
        <taxon>Muridae</taxon>
        <taxon>Murinae</taxon>
        <taxon>Rattus</taxon>
    </lineage>
</organism>
<sequence>MGEPEKRAGTHGIRCFAKIKVFLLALTWAYASKALSATYMNSMLTQIERRFNISTSIVGLINGSFEVGNLLLIIFVSYFGRKRHRPIMIGIGCAVMGLGCFIISLPHFLMGRYEYETTISPTSNLSSNSFLCMENRTQTLKPTQDPAECVKEMKSLMWIYVLVGNIIRGIGETPIMPLGISYIEDFAKSENSPFYIGILEVGKITGPIAAIWLGSFCATIYVDMGSVNTDDLTITPTDTRCVGAWWIGFLVCAGLNILISIPFFFFPKTFPKEGPEDMANETKNDEGDKHREKAKEEKRGITKDFFLFMKSLSCNPIYMLCVLTSVLQVNGFVSIFTFKPKYLEHHYGKSSSEAIFLMGLYTLPSVCVGYLISGFIMKKFKITLKKAAFISYCLGMSECLLSLCNFMLTCDNVPIAGLTTSYEGIQQSFDMENTVLADCNTRCSCLTKTWDPVCGDNGLAYITPCLAGCEKSVGSGINMVLQDCSCIQSSGNSSAVLGLCNKGPDCANKLQYFLIITVFCSFFYSLSLIPGYMIFLRCMKSEEKSLGIGLQAFCMRILGGILAPIYFGVLIDRTCLHWGTQKCGEPGACRTYEINSFRSIYLGLPAALRGSSYLPAFFILRLMRKFQFPGDINSPVTDHVEMMLTEKESEHTDVHRSPQVENDGELKTKL</sequence>
<proteinExistence type="evidence at transcript level"/>
<keyword id="KW-1003">Cell membrane</keyword>
<keyword id="KW-1015">Disulfide bond</keyword>
<keyword id="KW-0325">Glycoprotein</keyword>
<keyword id="KW-0406">Ion transport</keyword>
<keyword id="KW-0472">Membrane</keyword>
<keyword id="KW-0597">Phosphoprotein</keyword>
<keyword id="KW-1185">Reference proteome</keyword>
<keyword id="KW-0812">Transmembrane</keyword>
<keyword id="KW-1133">Transmembrane helix</keyword>
<keyword id="KW-0813">Transport</keyword>
<comment type="function">
    <text evidence="1">May mediate the Na(+)-independent transport of organic anions.</text>
</comment>
<comment type="subcellular location">
    <subcellularLocation>
        <location>Cell membrane</location>
        <topology>Multi-pass membrane protein</topology>
    </subcellularLocation>
</comment>
<comment type="similarity">
    <text evidence="6">Belongs to the organo anion transporter (TC 2.A.60) family.</text>
</comment>
<reference key="1">
    <citation type="submission" date="2000-01" db="EMBL/GenBank/DDBJ databases">
        <title>Cloning of a new member of the oatp family from rat kidney.</title>
        <authorList>
            <person name="Cattori V."/>
            <person name="Hagenbuch B."/>
            <person name="Stieger B."/>
            <person name="Winterhalter K.H."/>
            <person name="Meier P.J."/>
        </authorList>
    </citation>
    <scope>NUCLEOTIDE SEQUENCE [MRNA]</scope>
    <source>
        <strain>Sprague-Dawley</strain>
        <tissue>Kidney</tissue>
    </source>
</reference>
<gene>
    <name type="primary">Slco1a6</name>
    <name type="synonym">Oatp5</name>
    <name type="synonym">Slc21a13</name>
</gene>
<protein>
    <recommendedName>
        <fullName>Solute carrier organic anion transporter family member 1A6</fullName>
    </recommendedName>
    <alternativeName>
        <fullName>Kidney-specific organic anion-transporting polypeptide 5</fullName>
        <shortName>OATP-5</shortName>
    </alternativeName>
    <alternativeName>
        <fullName>Solute carrier family 21 member 13</fullName>
    </alternativeName>
</protein>